<evidence type="ECO:0000255" key="1">
    <source>
        <dbReference type="HAMAP-Rule" id="MF_00050"/>
    </source>
</evidence>
<accession>Q5H1E1</accession>
<gene>
    <name evidence="1" type="primary">tsf</name>
    <name type="ordered locus">XOO1976</name>
</gene>
<name>EFTS_XANOR</name>
<proteinExistence type="inferred from homology"/>
<keyword id="KW-0963">Cytoplasm</keyword>
<keyword id="KW-0251">Elongation factor</keyword>
<keyword id="KW-0648">Protein biosynthesis</keyword>
<keyword id="KW-1185">Reference proteome</keyword>
<comment type="function">
    <text evidence="1">Associates with the EF-Tu.GDP complex and induces the exchange of GDP to GTP. It remains bound to the aminoacyl-tRNA.EF-Tu.GTP complex up to the GTP hydrolysis stage on the ribosome.</text>
</comment>
<comment type="subcellular location">
    <subcellularLocation>
        <location evidence="1">Cytoplasm</location>
    </subcellularLocation>
</comment>
<comment type="similarity">
    <text evidence="1">Belongs to the EF-Ts family.</text>
</comment>
<organism>
    <name type="scientific">Xanthomonas oryzae pv. oryzae (strain KACC10331 / KXO85)</name>
    <dbReference type="NCBI Taxonomy" id="291331"/>
    <lineage>
        <taxon>Bacteria</taxon>
        <taxon>Pseudomonadati</taxon>
        <taxon>Pseudomonadota</taxon>
        <taxon>Gammaproteobacteria</taxon>
        <taxon>Lysobacterales</taxon>
        <taxon>Lysobacteraceae</taxon>
        <taxon>Xanthomonas</taxon>
    </lineage>
</organism>
<feature type="chain" id="PRO_0000241553" description="Elongation factor Ts">
    <location>
        <begin position="1"/>
        <end position="292"/>
    </location>
</feature>
<feature type="region of interest" description="Involved in Mg(2+) ion dislocation from EF-Tu" evidence="1">
    <location>
        <begin position="79"/>
        <end position="82"/>
    </location>
</feature>
<dbReference type="EMBL" id="AE013598">
    <property type="protein sequence ID" value="AAW75230.1"/>
    <property type="molecule type" value="Genomic_DNA"/>
</dbReference>
<dbReference type="SMR" id="Q5H1E1"/>
<dbReference type="STRING" id="291331.XOO1976"/>
<dbReference type="KEGG" id="xoo:XOO1976"/>
<dbReference type="HOGENOM" id="CLU_047155_0_0_6"/>
<dbReference type="Proteomes" id="UP000006735">
    <property type="component" value="Chromosome"/>
</dbReference>
<dbReference type="GO" id="GO:0005737">
    <property type="term" value="C:cytoplasm"/>
    <property type="evidence" value="ECO:0007669"/>
    <property type="project" value="UniProtKB-SubCell"/>
</dbReference>
<dbReference type="GO" id="GO:0003746">
    <property type="term" value="F:translation elongation factor activity"/>
    <property type="evidence" value="ECO:0007669"/>
    <property type="project" value="UniProtKB-UniRule"/>
</dbReference>
<dbReference type="CDD" id="cd14275">
    <property type="entry name" value="UBA_EF-Ts"/>
    <property type="match status" value="1"/>
</dbReference>
<dbReference type="FunFam" id="1.10.286.20:FF:000001">
    <property type="entry name" value="Elongation factor Ts"/>
    <property type="match status" value="1"/>
</dbReference>
<dbReference type="FunFam" id="1.10.8.10:FF:000001">
    <property type="entry name" value="Elongation factor Ts"/>
    <property type="match status" value="1"/>
</dbReference>
<dbReference type="FunFam" id="3.30.479.20:FF:000001">
    <property type="entry name" value="Elongation factor Ts"/>
    <property type="match status" value="1"/>
</dbReference>
<dbReference type="Gene3D" id="1.10.286.20">
    <property type="match status" value="1"/>
</dbReference>
<dbReference type="Gene3D" id="1.10.8.10">
    <property type="entry name" value="DNA helicase RuvA subunit, C-terminal domain"/>
    <property type="match status" value="1"/>
</dbReference>
<dbReference type="Gene3D" id="3.30.479.20">
    <property type="entry name" value="Elongation factor Ts, dimerisation domain"/>
    <property type="match status" value="2"/>
</dbReference>
<dbReference type="HAMAP" id="MF_00050">
    <property type="entry name" value="EF_Ts"/>
    <property type="match status" value="1"/>
</dbReference>
<dbReference type="InterPro" id="IPR036402">
    <property type="entry name" value="EF-Ts_dimer_sf"/>
</dbReference>
<dbReference type="InterPro" id="IPR001816">
    <property type="entry name" value="Transl_elong_EFTs/EF1B"/>
</dbReference>
<dbReference type="InterPro" id="IPR014039">
    <property type="entry name" value="Transl_elong_EFTs/EF1B_dimer"/>
</dbReference>
<dbReference type="InterPro" id="IPR018101">
    <property type="entry name" value="Transl_elong_Ts_CS"/>
</dbReference>
<dbReference type="InterPro" id="IPR009060">
    <property type="entry name" value="UBA-like_sf"/>
</dbReference>
<dbReference type="NCBIfam" id="TIGR00116">
    <property type="entry name" value="tsf"/>
    <property type="match status" value="1"/>
</dbReference>
<dbReference type="PANTHER" id="PTHR11741">
    <property type="entry name" value="ELONGATION FACTOR TS"/>
    <property type="match status" value="1"/>
</dbReference>
<dbReference type="PANTHER" id="PTHR11741:SF0">
    <property type="entry name" value="ELONGATION FACTOR TS, MITOCHONDRIAL"/>
    <property type="match status" value="1"/>
</dbReference>
<dbReference type="Pfam" id="PF00889">
    <property type="entry name" value="EF_TS"/>
    <property type="match status" value="1"/>
</dbReference>
<dbReference type="SUPFAM" id="SSF54713">
    <property type="entry name" value="Elongation factor Ts (EF-Ts), dimerisation domain"/>
    <property type="match status" value="2"/>
</dbReference>
<dbReference type="SUPFAM" id="SSF46934">
    <property type="entry name" value="UBA-like"/>
    <property type="match status" value="1"/>
</dbReference>
<dbReference type="PROSITE" id="PS01126">
    <property type="entry name" value="EF_TS_1"/>
    <property type="match status" value="1"/>
</dbReference>
<dbReference type="PROSITE" id="PS01127">
    <property type="entry name" value="EF_TS_2"/>
    <property type="match status" value="1"/>
</dbReference>
<protein>
    <recommendedName>
        <fullName evidence="1">Elongation factor Ts</fullName>
        <shortName evidence="1">EF-Ts</shortName>
    </recommendedName>
</protein>
<reference key="1">
    <citation type="journal article" date="2005" name="Nucleic Acids Res.">
        <title>The genome sequence of Xanthomonas oryzae pathovar oryzae KACC10331, the bacterial blight pathogen of rice.</title>
        <authorList>
            <person name="Lee B.-M."/>
            <person name="Park Y.-J."/>
            <person name="Park D.-S."/>
            <person name="Kang H.-W."/>
            <person name="Kim J.-G."/>
            <person name="Song E.-S."/>
            <person name="Park I.-C."/>
            <person name="Yoon U.-H."/>
            <person name="Hahn J.-H."/>
            <person name="Koo B.-S."/>
            <person name="Lee G.-B."/>
            <person name="Kim H."/>
            <person name="Park H.-S."/>
            <person name="Yoon K.-O."/>
            <person name="Kim J.-H."/>
            <person name="Jung C.-H."/>
            <person name="Koh N.-H."/>
            <person name="Seo J.-S."/>
            <person name="Go S.-J."/>
        </authorList>
    </citation>
    <scope>NUCLEOTIDE SEQUENCE [LARGE SCALE GENOMIC DNA]</scope>
    <source>
        <strain>KACC10331 / KXO85</strain>
    </source>
</reference>
<sequence length="292" mass="31133">MEITASLVKELRERTGAGMMECKKALVENAGDIDAAAEWLRKSGLAKADKKADRVAAEGRIATAQAGGKAVLVEVNSETDFVAKDENFLAFTEVVANAALNSDAADAEALKSVKLDSGETIEERRAAVIAKVGENLQVRRLVRIDSANNVAAYVHGGRIGVLVELKGGDIELARGIAMHIAAMNPPHVKASDVPAEFVAKEKEIELAKMSEKDKAKPADILEKIISGKISKIVNEVTLYGQPYVLNTDQTVEQAVKAAGAEVIRFQRLAVGEGIEKVVEDYAAEVMKQAGLA</sequence>